<proteinExistence type="inferred from homology"/>
<organism>
    <name type="scientific">Verminephrobacter eiseniae (strain EF01-2)</name>
    <dbReference type="NCBI Taxonomy" id="391735"/>
    <lineage>
        <taxon>Bacteria</taxon>
        <taxon>Pseudomonadati</taxon>
        <taxon>Pseudomonadota</taxon>
        <taxon>Betaproteobacteria</taxon>
        <taxon>Burkholderiales</taxon>
        <taxon>Comamonadaceae</taxon>
        <taxon>Verminephrobacter</taxon>
    </lineage>
</organism>
<gene>
    <name evidence="1" type="primary">rplB</name>
    <name type="ordered locus">Veis_1267</name>
</gene>
<name>RL2_VEREI</name>
<keyword id="KW-1185">Reference proteome</keyword>
<keyword id="KW-0687">Ribonucleoprotein</keyword>
<keyword id="KW-0689">Ribosomal protein</keyword>
<keyword id="KW-0694">RNA-binding</keyword>
<keyword id="KW-0699">rRNA-binding</keyword>
<feature type="chain" id="PRO_0000310037" description="Large ribosomal subunit protein uL2">
    <location>
        <begin position="1"/>
        <end position="274"/>
    </location>
</feature>
<feature type="region of interest" description="Disordered" evidence="2">
    <location>
        <begin position="223"/>
        <end position="274"/>
    </location>
</feature>
<feature type="compositionally biased region" description="Basic and acidic residues" evidence="2">
    <location>
        <begin position="229"/>
        <end position="246"/>
    </location>
</feature>
<accession>A1WHC8</accession>
<evidence type="ECO:0000255" key="1">
    <source>
        <dbReference type="HAMAP-Rule" id="MF_01320"/>
    </source>
</evidence>
<evidence type="ECO:0000256" key="2">
    <source>
        <dbReference type="SAM" id="MobiDB-lite"/>
    </source>
</evidence>
<evidence type="ECO:0000305" key="3"/>
<protein>
    <recommendedName>
        <fullName evidence="1">Large ribosomal subunit protein uL2</fullName>
    </recommendedName>
    <alternativeName>
        <fullName evidence="3">50S ribosomal protein L2</fullName>
    </alternativeName>
</protein>
<sequence length="274" mass="30154">MAVIKMKPTSPGRRAVVKVTREHLHKGQPHAPLLEPQFQKAGRNNNGHITTRHKGGGHKHHYRVVDFKRNKDGIAAKVERIEYDPNRTAHIALVCYADGERRYIIAPRNLEVGATLLSGAEAPIRAGNTLPIRNIPVGSTIHCIELKPGAGAQIARSAGASATLLAREGTYAQVRMRSGEVRKIHIECRATIGEVANEEHSLRQLGKAGVKRWMGIRPTVRGVAMNPVDHPHGGGEGRTGEGRHAVDPWGNLTKGYRTRNNKRTQSMIVSRRKK</sequence>
<reference key="1">
    <citation type="submission" date="2006-12" db="EMBL/GenBank/DDBJ databases">
        <title>Complete sequence of chromosome 1 of Verminephrobacter eiseniae EF01-2.</title>
        <authorList>
            <person name="Copeland A."/>
            <person name="Lucas S."/>
            <person name="Lapidus A."/>
            <person name="Barry K."/>
            <person name="Detter J.C."/>
            <person name="Glavina del Rio T."/>
            <person name="Dalin E."/>
            <person name="Tice H."/>
            <person name="Pitluck S."/>
            <person name="Chertkov O."/>
            <person name="Brettin T."/>
            <person name="Bruce D."/>
            <person name="Han C."/>
            <person name="Tapia R."/>
            <person name="Gilna P."/>
            <person name="Schmutz J."/>
            <person name="Larimer F."/>
            <person name="Land M."/>
            <person name="Hauser L."/>
            <person name="Kyrpides N."/>
            <person name="Kim E."/>
            <person name="Stahl D."/>
            <person name="Richardson P."/>
        </authorList>
    </citation>
    <scope>NUCLEOTIDE SEQUENCE [LARGE SCALE GENOMIC DNA]</scope>
    <source>
        <strain>EF01-2</strain>
    </source>
</reference>
<dbReference type="EMBL" id="CP000542">
    <property type="protein sequence ID" value="ABM57035.1"/>
    <property type="molecule type" value="Genomic_DNA"/>
</dbReference>
<dbReference type="RefSeq" id="WP_011809045.1">
    <property type="nucleotide sequence ID" value="NC_008786.1"/>
</dbReference>
<dbReference type="SMR" id="A1WHC8"/>
<dbReference type="STRING" id="391735.Veis_1267"/>
<dbReference type="GeneID" id="76459914"/>
<dbReference type="KEGG" id="vei:Veis_1267"/>
<dbReference type="eggNOG" id="COG0090">
    <property type="taxonomic scope" value="Bacteria"/>
</dbReference>
<dbReference type="HOGENOM" id="CLU_036235_2_1_4"/>
<dbReference type="OrthoDB" id="9778722at2"/>
<dbReference type="Proteomes" id="UP000000374">
    <property type="component" value="Chromosome"/>
</dbReference>
<dbReference type="GO" id="GO:0015934">
    <property type="term" value="C:large ribosomal subunit"/>
    <property type="evidence" value="ECO:0007669"/>
    <property type="project" value="InterPro"/>
</dbReference>
<dbReference type="GO" id="GO:0019843">
    <property type="term" value="F:rRNA binding"/>
    <property type="evidence" value="ECO:0007669"/>
    <property type="project" value="UniProtKB-UniRule"/>
</dbReference>
<dbReference type="GO" id="GO:0003735">
    <property type="term" value="F:structural constituent of ribosome"/>
    <property type="evidence" value="ECO:0007669"/>
    <property type="project" value="InterPro"/>
</dbReference>
<dbReference type="GO" id="GO:0016740">
    <property type="term" value="F:transferase activity"/>
    <property type="evidence" value="ECO:0007669"/>
    <property type="project" value="InterPro"/>
</dbReference>
<dbReference type="GO" id="GO:0002181">
    <property type="term" value="P:cytoplasmic translation"/>
    <property type="evidence" value="ECO:0007669"/>
    <property type="project" value="TreeGrafter"/>
</dbReference>
<dbReference type="FunFam" id="2.30.30.30:FF:000001">
    <property type="entry name" value="50S ribosomal protein L2"/>
    <property type="match status" value="1"/>
</dbReference>
<dbReference type="FunFam" id="2.40.50.140:FF:000003">
    <property type="entry name" value="50S ribosomal protein L2"/>
    <property type="match status" value="1"/>
</dbReference>
<dbReference type="FunFam" id="4.10.950.10:FF:000001">
    <property type="entry name" value="50S ribosomal protein L2"/>
    <property type="match status" value="1"/>
</dbReference>
<dbReference type="Gene3D" id="2.30.30.30">
    <property type="match status" value="1"/>
</dbReference>
<dbReference type="Gene3D" id="2.40.50.140">
    <property type="entry name" value="Nucleic acid-binding proteins"/>
    <property type="match status" value="1"/>
</dbReference>
<dbReference type="Gene3D" id="4.10.950.10">
    <property type="entry name" value="Ribosomal protein L2, domain 3"/>
    <property type="match status" value="1"/>
</dbReference>
<dbReference type="HAMAP" id="MF_01320_B">
    <property type="entry name" value="Ribosomal_uL2_B"/>
    <property type="match status" value="1"/>
</dbReference>
<dbReference type="InterPro" id="IPR012340">
    <property type="entry name" value="NA-bd_OB-fold"/>
</dbReference>
<dbReference type="InterPro" id="IPR014722">
    <property type="entry name" value="Rib_uL2_dom2"/>
</dbReference>
<dbReference type="InterPro" id="IPR002171">
    <property type="entry name" value="Ribosomal_uL2"/>
</dbReference>
<dbReference type="InterPro" id="IPR005880">
    <property type="entry name" value="Ribosomal_uL2_bac/org-type"/>
</dbReference>
<dbReference type="InterPro" id="IPR022669">
    <property type="entry name" value="Ribosomal_uL2_C"/>
</dbReference>
<dbReference type="InterPro" id="IPR022671">
    <property type="entry name" value="Ribosomal_uL2_CS"/>
</dbReference>
<dbReference type="InterPro" id="IPR014726">
    <property type="entry name" value="Ribosomal_uL2_dom3"/>
</dbReference>
<dbReference type="InterPro" id="IPR022666">
    <property type="entry name" value="Ribosomal_uL2_RNA-bd_dom"/>
</dbReference>
<dbReference type="InterPro" id="IPR008991">
    <property type="entry name" value="Translation_prot_SH3-like_sf"/>
</dbReference>
<dbReference type="NCBIfam" id="TIGR01171">
    <property type="entry name" value="rplB_bact"/>
    <property type="match status" value="1"/>
</dbReference>
<dbReference type="PANTHER" id="PTHR13691:SF5">
    <property type="entry name" value="LARGE RIBOSOMAL SUBUNIT PROTEIN UL2M"/>
    <property type="match status" value="1"/>
</dbReference>
<dbReference type="PANTHER" id="PTHR13691">
    <property type="entry name" value="RIBOSOMAL PROTEIN L2"/>
    <property type="match status" value="1"/>
</dbReference>
<dbReference type="Pfam" id="PF00181">
    <property type="entry name" value="Ribosomal_L2"/>
    <property type="match status" value="1"/>
</dbReference>
<dbReference type="Pfam" id="PF03947">
    <property type="entry name" value="Ribosomal_L2_C"/>
    <property type="match status" value="1"/>
</dbReference>
<dbReference type="PIRSF" id="PIRSF002158">
    <property type="entry name" value="Ribosomal_L2"/>
    <property type="match status" value="1"/>
</dbReference>
<dbReference type="SMART" id="SM01383">
    <property type="entry name" value="Ribosomal_L2"/>
    <property type="match status" value="1"/>
</dbReference>
<dbReference type="SMART" id="SM01382">
    <property type="entry name" value="Ribosomal_L2_C"/>
    <property type="match status" value="1"/>
</dbReference>
<dbReference type="SUPFAM" id="SSF50249">
    <property type="entry name" value="Nucleic acid-binding proteins"/>
    <property type="match status" value="1"/>
</dbReference>
<dbReference type="SUPFAM" id="SSF50104">
    <property type="entry name" value="Translation proteins SH3-like domain"/>
    <property type="match status" value="1"/>
</dbReference>
<dbReference type="PROSITE" id="PS00467">
    <property type="entry name" value="RIBOSOMAL_L2"/>
    <property type="match status" value="1"/>
</dbReference>
<comment type="function">
    <text evidence="1">One of the primary rRNA binding proteins. Required for association of the 30S and 50S subunits to form the 70S ribosome, for tRNA binding and peptide bond formation. It has been suggested to have peptidyltransferase activity; this is somewhat controversial. Makes several contacts with the 16S rRNA in the 70S ribosome.</text>
</comment>
<comment type="subunit">
    <text evidence="1">Part of the 50S ribosomal subunit. Forms a bridge to the 30S subunit in the 70S ribosome.</text>
</comment>
<comment type="similarity">
    <text evidence="1">Belongs to the universal ribosomal protein uL2 family.</text>
</comment>